<dbReference type="EC" id="3.5.3.8" evidence="1"/>
<dbReference type="EMBL" id="AJ938182">
    <property type="protein sequence ID" value="CAI81900.1"/>
    <property type="molecule type" value="Genomic_DNA"/>
</dbReference>
<dbReference type="RefSeq" id="WP_000277972.1">
    <property type="nucleotide sequence ID" value="NC_007622.1"/>
</dbReference>
<dbReference type="SMR" id="Q2YYV4"/>
<dbReference type="KEGG" id="sab:SAB2211c"/>
<dbReference type="HOGENOM" id="CLU_039478_2_0_9"/>
<dbReference type="UniPathway" id="UPA00379">
    <property type="reaction ID" value="UER00552"/>
</dbReference>
<dbReference type="GO" id="GO:0008783">
    <property type="term" value="F:agmatinase activity"/>
    <property type="evidence" value="ECO:0007669"/>
    <property type="project" value="TreeGrafter"/>
</dbReference>
<dbReference type="GO" id="GO:0050415">
    <property type="term" value="F:formimidoylglutamase activity"/>
    <property type="evidence" value="ECO:0007669"/>
    <property type="project" value="UniProtKB-UniRule"/>
</dbReference>
<dbReference type="GO" id="GO:0030145">
    <property type="term" value="F:manganese ion binding"/>
    <property type="evidence" value="ECO:0007669"/>
    <property type="project" value="UniProtKB-UniRule"/>
</dbReference>
<dbReference type="GO" id="GO:0019556">
    <property type="term" value="P:L-histidine catabolic process to glutamate and formamide"/>
    <property type="evidence" value="ECO:0007669"/>
    <property type="project" value="UniProtKB-UniPathway"/>
</dbReference>
<dbReference type="GO" id="GO:0019557">
    <property type="term" value="P:L-histidine catabolic process to glutamate and formate"/>
    <property type="evidence" value="ECO:0007669"/>
    <property type="project" value="UniProtKB-UniPathway"/>
</dbReference>
<dbReference type="GO" id="GO:0033389">
    <property type="term" value="P:putrescine biosynthetic process from arginine, via agmatine"/>
    <property type="evidence" value="ECO:0007669"/>
    <property type="project" value="TreeGrafter"/>
</dbReference>
<dbReference type="CDD" id="cd09988">
    <property type="entry name" value="Formimidoylglutamase"/>
    <property type="match status" value="1"/>
</dbReference>
<dbReference type="FunFam" id="3.40.800.10:FF:000015">
    <property type="entry name" value="Formimidoylglutamase"/>
    <property type="match status" value="1"/>
</dbReference>
<dbReference type="Gene3D" id="3.40.800.10">
    <property type="entry name" value="Ureohydrolase domain"/>
    <property type="match status" value="1"/>
</dbReference>
<dbReference type="HAMAP" id="MF_00737">
    <property type="entry name" value="Formimidoylglutam"/>
    <property type="match status" value="1"/>
</dbReference>
<dbReference type="InterPro" id="IPR005923">
    <property type="entry name" value="HutG"/>
</dbReference>
<dbReference type="InterPro" id="IPR006035">
    <property type="entry name" value="Ureohydrolase"/>
</dbReference>
<dbReference type="InterPro" id="IPR023696">
    <property type="entry name" value="Ureohydrolase_dom_sf"/>
</dbReference>
<dbReference type="NCBIfam" id="TIGR01227">
    <property type="entry name" value="hutG"/>
    <property type="match status" value="1"/>
</dbReference>
<dbReference type="PANTHER" id="PTHR11358">
    <property type="entry name" value="ARGINASE/AGMATINASE"/>
    <property type="match status" value="1"/>
</dbReference>
<dbReference type="PANTHER" id="PTHR11358:SF35">
    <property type="entry name" value="FORMIMIDOYLGLUTAMASE"/>
    <property type="match status" value="1"/>
</dbReference>
<dbReference type="Pfam" id="PF00491">
    <property type="entry name" value="Arginase"/>
    <property type="match status" value="1"/>
</dbReference>
<dbReference type="PIRSF" id="PIRSF036979">
    <property type="entry name" value="Arginase"/>
    <property type="match status" value="1"/>
</dbReference>
<dbReference type="SUPFAM" id="SSF52768">
    <property type="entry name" value="Arginase/deacetylase"/>
    <property type="match status" value="1"/>
</dbReference>
<dbReference type="PROSITE" id="PS51409">
    <property type="entry name" value="ARGINASE_2"/>
    <property type="match status" value="1"/>
</dbReference>
<keyword id="KW-0369">Histidine metabolism</keyword>
<keyword id="KW-0378">Hydrolase</keyword>
<keyword id="KW-0464">Manganese</keyword>
<keyword id="KW-0479">Metal-binding</keyword>
<gene>
    <name evidence="1" type="primary">hutG</name>
    <name type="ordered locus">SAB2211c</name>
</gene>
<accession>Q2YYV4</accession>
<protein>
    <recommendedName>
        <fullName evidence="1">Formimidoylglutamase</fullName>
        <ecNumber evidence="1">3.5.3.8</ecNumber>
    </recommendedName>
    <alternativeName>
        <fullName evidence="1">Formiminoglutamase</fullName>
    </alternativeName>
    <alternativeName>
        <fullName evidence="1">Formiminoglutamate hydrolase</fullName>
    </alternativeName>
</protein>
<name>HUTG_STAAB</name>
<organism>
    <name type="scientific">Staphylococcus aureus (strain bovine RF122 / ET3-1)</name>
    <dbReference type="NCBI Taxonomy" id="273036"/>
    <lineage>
        <taxon>Bacteria</taxon>
        <taxon>Bacillati</taxon>
        <taxon>Bacillota</taxon>
        <taxon>Bacilli</taxon>
        <taxon>Bacillales</taxon>
        <taxon>Staphylococcaceae</taxon>
        <taxon>Staphylococcus</taxon>
    </lineage>
</organism>
<sequence length="311" mass="34509">MYKQGEPNLWTGRLDSETDPKKFRHFQTVTFEDLSKLEKSSRPSGVGILGYAVDEGVALNKGRIGAKEGPDAIKQAFAGLPDLNQCEALVDYGNVYHDHEELIDTQKEFAMLAAKSIANHRQTFLLGGGHDIAYAQYLATRKVYPTQSIGVINIDAHFDTRAEQQSTSGTSFRQILEEDENTDYLVLGIAQGGNTQSLFDYAKEKKIDYVFADELLSHVSPTIKDMIERFVHEHDVIMFTICMDVIDSAFAPGVSAPAVLGLYPHTVLELAKRIIPSDKVSSVSIAEMNPTYDADNRTAKLVANLVHHFLK</sequence>
<feature type="chain" id="PRO_0000258261" description="Formimidoylglutamase">
    <location>
        <begin position="1"/>
        <end position="311"/>
    </location>
</feature>
<feature type="binding site" evidence="1">
    <location>
        <position position="130"/>
    </location>
    <ligand>
        <name>Mn(2+)</name>
        <dbReference type="ChEBI" id="CHEBI:29035"/>
        <label>1</label>
    </ligand>
</feature>
<feature type="binding site" evidence="1">
    <location>
        <position position="155"/>
    </location>
    <ligand>
        <name>Mn(2+)</name>
        <dbReference type="ChEBI" id="CHEBI:29035"/>
        <label>1</label>
    </ligand>
</feature>
<feature type="binding site" evidence="1">
    <location>
        <position position="155"/>
    </location>
    <ligand>
        <name>Mn(2+)</name>
        <dbReference type="ChEBI" id="CHEBI:29035"/>
        <label>2</label>
    </ligand>
</feature>
<feature type="binding site" evidence="1">
    <location>
        <position position="157"/>
    </location>
    <ligand>
        <name>Mn(2+)</name>
        <dbReference type="ChEBI" id="CHEBI:29035"/>
        <label>2</label>
    </ligand>
</feature>
<feature type="binding site" evidence="1">
    <location>
        <position position="159"/>
    </location>
    <ligand>
        <name>Mn(2+)</name>
        <dbReference type="ChEBI" id="CHEBI:29035"/>
        <label>1</label>
    </ligand>
</feature>
<feature type="binding site" evidence="1">
    <location>
        <position position="242"/>
    </location>
    <ligand>
        <name>Mn(2+)</name>
        <dbReference type="ChEBI" id="CHEBI:29035"/>
        <label>1</label>
    </ligand>
</feature>
<feature type="binding site" evidence="1">
    <location>
        <position position="242"/>
    </location>
    <ligand>
        <name>Mn(2+)</name>
        <dbReference type="ChEBI" id="CHEBI:29035"/>
        <label>2</label>
    </ligand>
</feature>
<feature type="binding site" evidence="1">
    <location>
        <position position="244"/>
    </location>
    <ligand>
        <name>Mn(2+)</name>
        <dbReference type="ChEBI" id="CHEBI:29035"/>
        <label>2</label>
    </ligand>
</feature>
<evidence type="ECO:0000255" key="1">
    <source>
        <dbReference type="HAMAP-Rule" id="MF_00737"/>
    </source>
</evidence>
<reference key="1">
    <citation type="journal article" date="2007" name="PLoS ONE">
        <title>Molecular correlates of host specialization in Staphylococcus aureus.</title>
        <authorList>
            <person name="Herron-Olson L."/>
            <person name="Fitzgerald J.R."/>
            <person name="Musser J.M."/>
            <person name="Kapur V."/>
        </authorList>
    </citation>
    <scope>NUCLEOTIDE SEQUENCE [LARGE SCALE GENOMIC DNA]</scope>
    <source>
        <strain>bovine RF122 / ET3-1</strain>
    </source>
</reference>
<proteinExistence type="inferred from homology"/>
<comment type="function">
    <text evidence="1">Catalyzes the conversion of N-formimidoyl-L-glutamate to L-glutamate and formamide.</text>
</comment>
<comment type="catalytic activity">
    <reaction evidence="1">
        <text>N-formimidoyl-L-glutamate + H2O = formamide + L-glutamate</text>
        <dbReference type="Rhea" id="RHEA:22492"/>
        <dbReference type="ChEBI" id="CHEBI:15377"/>
        <dbReference type="ChEBI" id="CHEBI:16397"/>
        <dbReference type="ChEBI" id="CHEBI:29985"/>
        <dbReference type="ChEBI" id="CHEBI:58928"/>
        <dbReference type="EC" id="3.5.3.8"/>
    </reaction>
</comment>
<comment type="cofactor">
    <cofactor evidence="1">
        <name>Mn(2+)</name>
        <dbReference type="ChEBI" id="CHEBI:29035"/>
    </cofactor>
    <text evidence="1">Binds 2 manganese ions per subunit.</text>
</comment>
<comment type="pathway">
    <text evidence="1">Amino-acid degradation; L-histidine degradation into L-glutamate; L-glutamate from N-formimidoyl-L-glutamate (hydrolase route): step 1/1.</text>
</comment>
<comment type="similarity">
    <text evidence="1">Belongs to the arginase family.</text>
</comment>